<keyword id="KW-0028">Amino-acid biosynthesis</keyword>
<keyword id="KW-0057">Aromatic amino acid biosynthesis</keyword>
<keyword id="KW-0104">Cadmium</keyword>
<keyword id="KW-0170">Cobalt</keyword>
<keyword id="KW-0464">Manganese</keyword>
<keyword id="KW-0479">Metal-binding</keyword>
<keyword id="KW-1185">Reference proteome</keyword>
<keyword id="KW-0808">Transferase</keyword>
<organism>
    <name type="scientific">Mycolicibacterium smegmatis (strain ATCC 700084 / mc(2)155)</name>
    <name type="common">Mycobacterium smegmatis</name>
    <dbReference type="NCBI Taxonomy" id="246196"/>
    <lineage>
        <taxon>Bacteria</taxon>
        <taxon>Bacillati</taxon>
        <taxon>Actinomycetota</taxon>
        <taxon>Actinomycetes</taxon>
        <taxon>Mycobacteriales</taxon>
        <taxon>Mycobacteriaceae</taxon>
        <taxon>Mycolicibacterium</taxon>
    </lineage>
</organism>
<name>AROG_MYCS2</name>
<comment type="function">
    <text evidence="1">Catalyzes an aldol-like condensation reaction between phosphoenolpyruvate (PEP) and D-erythrose 4-phosphate (E4P) to generate 3-deoxy-D-arabino-heptulosonate 7-phosphate (DAH7P) and inorganic phosphate.</text>
</comment>
<comment type="catalytic activity">
    <reaction evidence="1">
        <text>D-erythrose 4-phosphate + phosphoenolpyruvate + H2O = 7-phospho-2-dehydro-3-deoxy-D-arabino-heptonate + phosphate</text>
        <dbReference type="Rhea" id="RHEA:14717"/>
        <dbReference type="ChEBI" id="CHEBI:15377"/>
        <dbReference type="ChEBI" id="CHEBI:16897"/>
        <dbReference type="ChEBI" id="CHEBI:43474"/>
        <dbReference type="ChEBI" id="CHEBI:58394"/>
        <dbReference type="ChEBI" id="CHEBI:58702"/>
        <dbReference type="EC" id="2.5.1.54"/>
    </reaction>
    <physiologicalReaction direction="left-to-right" evidence="1">
        <dbReference type="Rhea" id="RHEA:14718"/>
    </physiologicalReaction>
</comment>
<comment type="cofactor">
    <cofactor evidence="1">
        <name>Mn(2+)</name>
        <dbReference type="ChEBI" id="CHEBI:29035"/>
    </cofactor>
    <cofactor evidence="1">
        <name>Co(2+)</name>
        <dbReference type="ChEBI" id="CHEBI:48828"/>
    </cofactor>
    <cofactor evidence="1">
        <name>Cd(2+)</name>
        <dbReference type="ChEBI" id="CHEBI:48775"/>
    </cofactor>
    <text evidence="1">Binds 1 divalent cation per subunit. The enzyme is active with manganese, cobalt or cadmium ions.</text>
</comment>
<comment type="pathway">
    <text evidence="1">Metabolic intermediate biosynthesis; chorismate biosynthesis; chorismate from D-erythrose 4-phosphate and phosphoenolpyruvate: step 1/7.</text>
</comment>
<comment type="subunit">
    <text evidence="1">Homodimer (By similarity). Probably interacts with MSMEG_5536.</text>
</comment>
<comment type="similarity">
    <text evidence="2">Belongs to the class-II DAHP synthase family.</text>
</comment>
<accession>A0R033</accession>
<accession>I7GBP1</accession>
<gene>
    <name type="primary">aroG</name>
    <name type="ordered locus">MSMEG_4244</name>
    <name type="ordered locus">MSMEI_4144</name>
</gene>
<proteinExistence type="inferred from homology"/>
<reference key="1">
    <citation type="submission" date="2006-10" db="EMBL/GenBank/DDBJ databases">
        <authorList>
            <person name="Fleischmann R.D."/>
            <person name="Dodson R.J."/>
            <person name="Haft D.H."/>
            <person name="Merkel J.S."/>
            <person name="Nelson W.C."/>
            <person name="Fraser C.M."/>
        </authorList>
    </citation>
    <scope>NUCLEOTIDE SEQUENCE [LARGE SCALE GENOMIC DNA]</scope>
    <source>
        <strain>ATCC 700084 / mc(2)155</strain>
    </source>
</reference>
<reference key="2">
    <citation type="journal article" date="2007" name="Genome Biol.">
        <title>Interrupted coding sequences in Mycobacterium smegmatis: authentic mutations or sequencing errors?</title>
        <authorList>
            <person name="Deshayes C."/>
            <person name="Perrodou E."/>
            <person name="Gallien S."/>
            <person name="Euphrasie D."/>
            <person name="Schaeffer C."/>
            <person name="Van-Dorsselaer A."/>
            <person name="Poch O."/>
            <person name="Lecompte O."/>
            <person name="Reyrat J.-M."/>
        </authorList>
    </citation>
    <scope>NUCLEOTIDE SEQUENCE [LARGE SCALE GENOMIC DNA]</scope>
    <source>
        <strain>ATCC 700084 / mc(2)155</strain>
    </source>
</reference>
<reference key="3">
    <citation type="journal article" date="2009" name="Genome Res.">
        <title>Ortho-proteogenomics: multiple proteomes investigation through orthology and a new MS-based protocol.</title>
        <authorList>
            <person name="Gallien S."/>
            <person name="Perrodou E."/>
            <person name="Carapito C."/>
            <person name="Deshayes C."/>
            <person name="Reyrat J.-M."/>
            <person name="Van Dorsselaer A."/>
            <person name="Poch O."/>
            <person name="Schaeffer C."/>
            <person name="Lecompte O."/>
        </authorList>
    </citation>
    <scope>NUCLEOTIDE SEQUENCE [LARGE SCALE GENOMIC DNA]</scope>
    <source>
        <strain>ATCC 700084 / mc(2)155</strain>
    </source>
</reference>
<protein>
    <recommendedName>
        <fullName>Phospho-2-dehydro-3-deoxyheptonate aldolase AroG</fullName>
        <ecNumber evidence="1">2.5.1.54</ecNumber>
    </recommendedName>
    <alternativeName>
        <fullName>3-deoxy-D-arabino-heptulosonate 7-phosphate synthase</fullName>
    </alternativeName>
    <alternativeName>
        <fullName>DAHP synthase</fullName>
    </alternativeName>
    <alternativeName>
        <fullName>Phospho-2-keto-3-deoxyheptonate aldolase</fullName>
    </alternativeName>
</protein>
<sequence>MNWTVDIPIDQLPPLPPLSDELRQRLDSALAKPAVQQPSWDPDAAKAMRTVLESVPPVTVPSEIEKLKGLLADVAQGKAFLLQGGDCAETFVDNTEPHIRANIRTLLQMAVVLTYGASMPVVKVARIAGQYAKPRSSDVDALGLKSYRGDMINGFAPDAAAREHDPSRLVRAYANASAAMNLMRALTSSGLASLHLVHEWNREFVRTSPAGARYEALAGEIDRGLNFMSACGVADRNLQTAEIFASHEALVLDYERAMLRLSNPAETDGAAKLYDQSAHYLWIGERTRQLDGAHVAFAEVIANPIGVKLGPTTTPELAVEYVERLDPNNEPGRLTLVTRMGNNKVRDLLPPIIEKVQATGHQVIWQCDPMHGNTHESSTGYKTRHFDRIVDEVQGFFEVHHALGTHPGGIHVEITGENVTECLGGAQDISDSDLAGRYETACDPRLNTQQSLELAFLVAEMLRD</sequence>
<dbReference type="EC" id="2.5.1.54" evidence="1"/>
<dbReference type="EMBL" id="CP000480">
    <property type="protein sequence ID" value="ABK71107.1"/>
    <property type="molecule type" value="Genomic_DNA"/>
</dbReference>
<dbReference type="EMBL" id="CP001663">
    <property type="protein sequence ID" value="AFP40601.1"/>
    <property type="molecule type" value="Genomic_DNA"/>
</dbReference>
<dbReference type="RefSeq" id="WP_003895637.1">
    <property type="nucleotide sequence ID" value="NZ_SIJM01000003.1"/>
</dbReference>
<dbReference type="RefSeq" id="YP_888521.1">
    <property type="nucleotide sequence ID" value="NC_008596.1"/>
</dbReference>
<dbReference type="SMR" id="A0R033"/>
<dbReference type="STRING" id="246196.MSMEG_4244"/>
<dbReference type="PaxDb" id="246196-MSMEI_4144"/>
<dbReference type="KEGG" id="msb:LJ00_21040"/>
<dbReference type="KEGG" id="msg:MSMEI_4144"/>
<dbReference type="KEGG" id="msm:MSMEG_4244"/>
<dbReference type="PATRIC" id="fig|246196.19.peg.4164"/>
<dbReference type="eggNOG" id="COG3200">
    <property type="taxonomic scope" value="Bacteria"/>
</dbReference>
<dbReference type="OrthoDB" id="9766852at2"/>
<dbReference type="UniPathway" id="UPA00053">
    <property type="reaction ID" value="UER00084"/>
</dbReference>
<dbReference type="Proteomes" id="UP000000757">
    <property type="component" value="Chromosome"/>
</dbReference>
<dbReference type="Proteomes" id="UP000006158">
    <property type="component" value="Chromosome"/>
</dbReference>
<dbReference type="GO" id="GO:0005886">
    <property type="term" value="C:plasma membrane"/>
    <property type="evidence" value="ECO:0000250"/>
    <property type="project" value="UniProtKB"/>
</dbReference>
<dbReference type="GO" id="GO:0003849">
    <property type="term" value="F:3-deoxy-7-phosphoheptulonate synthase activity"/>
    <property type="evidence" value="ECO:0000250"/>
    <property type="project" value="UniProtKB"/>
</dbReference>
<dbReference type="GO" id="GO:0030145">
    <property type="term" value="F:manganese ion binding"/>
    <property type="evidence" value="ECO:0000250"/>
    <property type="project" value="UniProtKB"/>
</dbReference>
<dbReference type="GO" id="GO:0008652">
    <property type="term" value="P:amino acid biosynthetic process"/>
    <property type="evidence" value="ECO:0007669"/>
    <property type="project" value="UniProtKB-KW"/>
</dbReference>
<dbReference type="GO" id="GO:0009073">
    <property type="term" value="P:aromatic amino acid family biosynthetic process"/>
    <property type="evidence" value="ECO:0007669"/>
    <property type="project" value="UniProtKB-KW"/>
</dbReference>
<dbReference type="GO" id="GO:0009423">
    <property type="term" value="P:chorismate biosynthetic process"/>
    <property type="evidence" value="ECO:0007669"/>
    <property type="project" value="UniProtKB-UniPathway"/>
</dbReference>
<dbReference type="FunFam" id="3.20.20.70:FF:000128">
    <property type="entry name" value="Phospho-2-dehydro-3-deoxyheptonate aldolase"/>
    <property type="match status" value="1"/>
</dbReference>
<dbReference type="FunFam" id="3.20.20.70:FF:000139">
    <property type="entry name" value="Phospho-2-dehydro-3-deoxyheptonate aldolase"/>
    <property type="match status" value="1"/>
</dbReference>
<dbReference type="Gene3D" id="3.20.20.70">
    <property type="entry name" value="Aldolase class I"/>
    <property type="match status" value="2"/>
</dbReference>
<dbReference type="InterPro" id="IPR013785">
    <property type="entry name" value="Aldolase_TIM"/>
</dbReference>
<dbReference type="InterPro" id="IPR002480">
    <property type="entry name" value="DAHP_synth_2"/>
</dbReference>
<dbReference type="NCBIfam" id="TIGR01358">
    <property type="entry name" value="DAHP_synth_II"/>
    <property type="match status" value="1"/>
</dbReference>
<dbReference type="PANTHER" id="PTHR21337:SF0">
    <property type="entry name" value="PHOSPHO-2-DEHYDRO-3-DEOXYHEPTONATE ALDOLASE"/>
    <property type="match status" value="1"/>
</dbReference>
<dbReference type="PANTHER" id="PTHR21337">
    <property type="entry name" value="PHOSPHO-2-DEHYDRO-3-DEOXYHEPTONATE ALDOLASE 1, 2"/>
    <property type="match status" value="1"/>
</dbReference>
<dbReference type="Pfam" id="PF01474">
    <property type="entry name" value="DAHP_synth_2"/>
    <property type="match status" value="1"/>
</dbReference>
<dbReference type="SUPFAM" id="SSF51569">
    <property type="entry name" value="Aldolase"/>
    <property type="match status" value="1"/>
</dbReference>
<evidence type="ECO:0000250" key="1">
    <source>
        <dbReference type="UniProtKB" id="O53512"/>
    </source>
</evidence>
<evidence type="ECO:0000305" key="2"/>
<feature type="chain" id="PRO_0000414910" description="Phospho-2-dehydro-3-deoxyheptonate aldolase AroG">
    <location>
        <begin position="1"/>
        <end position="464"/>
    </location>
</feature>
<feature type="binding site" evidence="1">
    <location>
        <position position="87"/>
    </location>
    <ligand>
        <name>Mn(2+)</name>
        <dbReference type="ChEBI" id="CHEBI:29035"/>
    </ligand>
</feature>
<feature type="binding site" evidence="1">
    <location>
        <position position="126"/>
    </location>
    <ligand>
        <name>phosphoenolpyruvate</name>
        <dbReference type="ChEBI" id="CHEBI:58702"/>
    </ligand>
</feature>
<feature type="binding site" evidence="1">
    <location>
        <begin position="285"/>
        <end position="286"/>
    </location>
    <ligand>
        <name>phosphoenolpyruvate</name>
        <dbReference type="ChEBI" id="CHEBI:58702"/>
    </ligand>
</feature>
<feature type="binding site" evidence="1">
    <location>
        <position position="308"/>
    </location>
    <ligand>
        <name>phosphoenolpyruvate</name>
        <dbReference type="ChEBI" id="CHEBI:58702"/>
    </ligand>
</feature>
<feature type="binding site" evidence="1">
    <location>
        <position position="339"/>
    </location>
    <ligand>
        <name>phosphoenolpyruvate</name>
        <dbReference type="ChEBI" id="CHEBI:58702"/>
    </ligand>
</feature>
<feature type="binding site" evidence="1">
    <location>
        <position position="371"/>
    </location>
    <ligand>
        <name>Mn(2+)</name>
        <dbReference type="ChEBI" id="CHEBI:29035"/>
    </ligand>
</feature>
<feature type="binding site" evidence="1">
    <location>
        <position position="413"/>
    </location>
    <ligand>
        <name>Mn(2+)</name>
        <dbReference type="ChEBI" id="CHEBI:29035"/>
    </ligand>
</feature>
<feature type="binding site" evidence="1">
    <location>
        <position position="443"/>
    </location>
    <ligand>
        <name>Mn(2+)</name>
        <dbReference type="ChEBI" id="CHEBI:29035"/>
    </ligand>
</feature>